<organism>
    <name type="scientific">Rattus norvegicus</name>
    <name type="common">Rat</name>
    <dbReference type="NCBI Taxonomy" id="10116"/>
    <lineage>
        <taxon>Eukaryota</taxon>
        <taxon>Metazoa</taxon>
        <taxon>Chordata</taxon>
        <taxon>Craniata</taxon>
        <taxon>Vertebrata</taxon>
        <taxon>Euteleostomi</taxon>
        <taxon>Mammalia</taxon>
        <taxon>Eutheria</taxon>
        <taxon>Euarchontoglires</taxon>
        <taxon>Glires</taxon>
        <taxon>Rodentia</taxon>
        <taxon>Myomorpha</taxon>
        <taxon>Muroidea</taxon>
        <taxon>Muridae</taxon>
        <taxon>Murinae</taxon>
        <taxon>Rattus</taxon>
    </lineage>
</organism>
<feature type="chain" id="PRO_0000106319" description="PEX5-related protein">
    <location>
        <begin position="1"/>
        <end position="602"/>
    </location>
</feature>
<feature type="repeat" description="TPR 1">
    <location>
        <begin position="302"/>
        <end position="335"/>
    </location>
</feature>
<feature type="repeat" description="TPR 2">
    <location>
        <begin position="336"/>
        <end position="369"/>
    </location>
</feature>
<feature type="repeat" description="TPR 3">
    <location>
        <begin position="371"/>
        <end position="403"/>
    </location>
</feature>
<feature type="repeat" description="TPR 4">
    <location>
        <begin position="450"/>
        <end position="483"/>
    </location>
</feature>
<feature type="repeat" description="TPR 5">
    <location>
        <begin position="485"/>
        <end position="517"/>
    </location>
</feature>
<feature type="repeat" description="TPR 6">
    <location>
        <begin position="519"/>
        <end position="551"/>
    </location>
</feature>
<feature type="region of interest" description="Disordered" evidence="2">
    <location>
        <begin position="94"/>
        <end position="140"/>
    </location>
</feature>
<feature type="region of interest" description="Disordered" evidence="2">
    <location>
        <begin position="167"/>
        <end position="206"/>
    </location>
</feature>
<feature type="modified residue" description="Phosphoserine" evidence="1">
    <location>
        <position position="181"/>
    </location>
</feature>
<feature type="modified residue" description="Phosphoserine" evidence="6">
    <location>
        <position position="229"/>
    </location>
</feature>
<feature type="modified residue" description="Phosphoserine" evidence="6">
    <location>
        <position position="233"/>
    </location>
</feature>
<feature type="modified residue" description="Phosphoserine" evidence="6">
    <location>
        <position position="237"/>
    </location>
</feature>
<feature type="modified residue" description="Phosphoserine" evidence="1">
    <location>
        <position position="421"/>
    </location>
</feature>
<feature type="modified residue" description="Phosphoserine" evidence="6">
    <location>
        <position position="423"/>
    </location>
</feature>
<evidence type="ECO:0000250" key="1">
    <source>
        <dbReference type="UniProtKB" id="Q8C437"/>
    </source>
</evidence>
<evidence type="ECO:0000256" key="2">
    <source>
        <dbReference type="SAM" id="MobiDB-lite"/>
    </source>
</evidence>
<evidence type="ECO:0000269" key="3">
    <source>
    </source>
</evidence>
<evidence type="ECO:0000269" key="4">
    <source>
    </source>
</evidence>
<evidence type="ECO:0000305" key="5"/>
<evidence type="ECO:0007744" key="6">
    <source>
    </source>
</evidence>
<protein>
    <recommendedName>
        <fullName>PEX5-related protein</fullName>
    </recommendedName>
    <alternativeName>
        <fullName>PEX5-like protein</fullName>
    </alternativeName>
    <alternativeName>
        <fullName>Peroxin-5-related protein</fullName>
    </alternativeName>
    <alternativeName>
        <fullName>TPR-containing Rab8b-interacting protein</fullName>
    </alternativeName>
    <alternativeName>
        <fullName>Tetratricopeptide repeat-containing Rab8b-interacting protein</fullName>
        <shortName>Pex5Rp</shortName>
        <shortName>TRIP8b</shortName>
    </alternativeName>
</protein>
<proteinExistence type="evidence at protein level"/>
<dbReference type="EMBL" id="AF324454">
    <property type="protein sequence ID" value="AAK38580.1"/>
    <property type="molecule type" value="mRNA"/>
</dbReference>
<dbReference type="RefSeq" id="NP_775175.1">
    <property type="nucleotide sequence ID" value="NM_173152.1"/>
</dbReference>
<dbReference type="SMR" id="Q925N3"/>
<dbReference type="BioGRID" id="251927">
    <property type="interactions" value="2"/>
</dbReference>
<dbReference type="FunCoup" id="Q925N3">
    <property type="interactions" value="1021"/>
</dbReference>
<dbReference type="STRING" id="10116.ENSRNOP00000015200"/>
<dbReference type="iPTMnet" id="Q925N3"/>
<dbReference type="PhosphoSitePlus" id="Q925N3"/>
<dbReference type="jPOST" id="Q925N3"/>
<dbReference type="PaxDb" id="10116-ENSRNOP00000015200"/>
<dbReference type="ABCD" id="Q925N3">
    <property type="antibodies" value="5 sequenced antibodies"/>
</dbReference>
<dbReference type="GeneID" id="286937"/>
<dbReference type="KEGG" id="rno:286937"/>
<dbReference type="UCSC" id="RGD:708407">
    <property type="organism name" value="rat"/>
</dbReference>
<dbReference type="AGR" id="RGD:708407"/>
<dbReference type="CTD" id="51555"/>
<dbReference type="RGD" id="708407">
    <property type="gene designation" value="Pex5l"/>
</dbReference>
<dbReference type="eggNOG" id="KOG1125">
    <property type="taxonomic scope" value="Eukaryota"/>
</dbReference>
<dbReference type="InParanoid" id="Q925N3"/>
<dbReference type="PhylomeDB" id="Q925N3"/>
<dbReference type="PRO" id="PR:Q925N3"/>
<dbReference type="Proteomes" id="UP000002494">
    <property type="component" value="Unplaced"/>
</dbReference>
<dbReference type="GO" id="GO:0051286">
    <property type="term" value="C:cell tip"/>
    <property type="evidence" value="ECO:0000314"/>
    <property type="project" value="RGD"/>
</dbReference>
<dbReference type="GO" id="GO:0005737">
    <property type="term" value="C:cytoplasm"/>
    <property type="evidence" value="ECO:0000266"/>
    <property type="project" value="RGD"/>
</dbReference>
<dbReference type="GO" id="GO:0005829">
    <property type="term" value="C:cytosol"/>
    <property type="evidence" value="ECO:0000266"/>
    <property type="project" value="RGD"/>
</dbReference>
<dbReference type="GO" id="GO:0030425">
    <property type="term" value="C:dendrite"/>
    <property type="evidence" value="ECO:0000266"/>
    <property type="project" value="RGD"/>
</dbReference>
<dbReference type="GO" id="GO:0017071">
    <property type="term" value="C:intracellular cyclic nucleotide activated cation channel complex"/>
    <property type="evidence" value="ECO:0000314"/>
    <property type="project" value="UniProtKB"/>
</dbReference>
<dbReference type="GO" id="GO:0048471">
    <property type="term" value="C:perinuclear region of cytoplasm"/>
    <property type="evidence" value="ECO:0000314"/>
    <property type="project" value="RGD"/>
</dbReference>
<dbReference type="GO" id="GO:0005778">
    <property type="term" value="C:peroxisomal membrane"/>
    <property type="evidence" value="ECO:0000318"/>
    <property type="project" value="GO_Central"/>
</dbReference>
<dbReference type="GO" id="GO:0043235">
    <property type="term" value="C:receptor complex"/>
    <property type="evidence" value="ECO:0000266"/>
    <property type="project" value="RGD"/>
</dbReference>
<dbReference type="GO" id="GO:0005221">
    <property type="term" value="F:intracellularly cyclic nucleotide-activated monoatomic cation channel activity"/>
    <property type="evidence" value="ECO:0000314"/>
    <property type="project" value="UniProtKB"/>
</dbReference>
<dbReference type="GO" id="GO:0005052">
    <property type="term" value="F:peroxisome matrix targeting signal-1 binding"/>
    <property type="evidence" value="ECO:0000266"/>
    <property type="project" value="RGD"/>
</dbReference>
<dbReference type="GO" id="GO:0000268">
    <property type="term" value="F:peroxisome targeting sequence binding"/>
    <property type="evidence" value="ECO:0000266"/>
    <property type="project" value="RGD"/>
</dbReference>
<dbReference type="GO" id="GO:0031267">
    <property type="term" value="F:small GTPase binding"/>
    <property type="evidence" value="ECO:0000353"/>
    <property type="project" value="RGD"/>
</dbReference>
<dbReference type="GO" id="GO:0045185">
    <property type="term" value="P:maintenance of protein location"/>
    <property type="evidence" value="ECO:0000266"/>
    <property type="project" value="RGD"/>
</dbReference>
<dbReference type="GO" id="GO:0051461">
    <property type="term" value="P:positive regulation of corticotropin secretion"/>
    <property type="evidence" value="ECO:0000314"/>
    <property type="project" value="RGD"/>
</dbReference>
<dbReference type="GO" id="GO:0016560">
    <property type="term" value="P:protein import into peroxisome matrix, docking"/>
    <property type="evidence" value="ECO:0000318"/>
    <property type="project" value="GO_Central"/>
</dbReference>
<dbReference type="GO" id="GO:0045055">
    <property type="term" value="P:regulated exocytosis"/>
    <property type="evidence" value="ECO:0000314"/>
    <property type="project" value="RGD"/>
</dbReference>
<dbReference type="GO" id="GO:0042391">
    <property type="term" value="P:regulation of membrane potential"/>
    <property type="evidence" value="ECO:0000266"/>
    <property type="project" value="RGD"/>
</dbReference>
<dbReference type="FunFam" id="1.25.40.10:FF:000012">
    <property type="entry name" value="PEX5-related protein isoform 5"/>
    <property type="match status" value="1"/>
</dbReference>
<dbReference type="Gene3D" id="1.25.40.10">
    <property type="entry name" value="Tetratricopeptide repeat domain"/>
    <property type="match status" value="1"/>
</dbReference>
<dbReference type="InterPro" id="IPR024111">
    <property type="entry name" value="PEX5/PEX5L"/>
</dbReference>
<dbReference type="InterPro" id="IPR011990">
    <property type="entry name" value="TPR-like_helical_dom_sf"/>
</dbReference>
<dbReference type="InterPro" id="IPR019734">
    <property type="entry name" value="TPR_rpt"/>
</dbReference>
<dbReference type="PANTHER" id="PTHR10130">
    <property type="entry name" value="PEROXISOMAL TARGETING SIGNAL 1 RECEPTOR PEX5"/>
    <property type="match status" value="1"/>
</dbReference>
<dbReference type="PANTHER" id="PTHR10130:SF1">
    <property type="entry name" value="PEX5-RELATED PROTEIN"/>
    <property type="match status" value="1"/>
</dbReference>
<dbReference type="Pfam" id="PF13432">
    <property type="entry name" value="TPR_16"/>
    <property type="match status" value="1"/>
</dbReference>
<dbReference type="Pfam" id="PF13181">
    <property type="entry name" value="TPR_8"/>
    <property type="match status" value="2"/>
</dbReference>
<dbReference type="SMART" id="SM00028">
    <property type="entry name" value="TPR"/>
    <property type="match status" value="5"/>
</dbReference>
<dbReference type="SUPFAM" id="SSF48452">
    <property type="entry name" value="TPR-like"/>
    <property type="match status" value="1"/>
</dbReference>
<dbReference type="PROSITE" id="PS50005">
    <property type="entry name" value="TPR"/>
    <property type="match status" value="5"/>
</dbReference>
<dbReference type="PROSITE" id="PS50293">
    <property type="entry name" value="TPR_REGION"/>
    <property type="match status" value="1"/>
</dbReference>
<reference key="1">
    <citation type="journal article" date="2001" name="J. Biol. Chem.">
        <title>Rab8b and its interacting partner TRIP8b are involved in regulated secretion in AtT20 cells.</title>
        <authorList>
            <person name="Chen S."/>
            <person name="Liang M.C."/>
            <person name="Chia J.N."/>
            <person name="Ngsee J.K."/>
            <person name="Ting A.E."/>
        </authorList>
    </citation>
    <scope>NUCLEOTIDE SEQUENCE [MRNA]</scope>
    <scope>SUBCELLULAR LOCATION</scope>
    <scope>TISSUE SPECIFICITY</scope>
    <scope>INTERACTION WITH RAB8B</scope>
    <source>
        <tissue>Brain</tissue>
    </source>
</reference>
<reference key="2">
    <citation type="journal article" date="2009" name="Neuron">
        <title>Association with the auxiliary subunit PEX5R/Trip8b controls responsiveness of HCN channels to cAMP and adrenergic stimulation.</title>
        <authorList>
            <person name="Zolles G."/>
            <person name="Wenzel D."/>
            <person name="Bildl W."/>
            <person name="Schulte U."/>
            <person name="Hofmann A."/>
            <person name="Muller C.S."/>
            <person name="Thumfart J.O."/>
            <person name="Vlachos A."/>
            <person name="Deller T."/>
            <person name="Pfeifer A."/>
            <person name="Fleischmann B.K."/>
            <person name="Roeper J."/>
            <person name="Fakler B."/>
            <person name="Klocker N."/>
        </authorList>
    </citation>
    <scope>FUNCTION</scope>
</reference>
<reference key="3">
    <citation type="journal article" date="2012" name="Nat. Commun.">
        <title>Quantitative maps of protein phosphorylation sites across 14 different rat organs and tissues.</title>
        <authorList>
            <person name="Lundby A."/>
            <person name="Secher A."/>
            <person name="Lage K."/>
            <person name="Nordsborg N.B."/>
            <person name="Dmytriyev A."/>
            <person name="Lundby C."/>
            <person name="Olsen J.V."/>
        </authorList>
    </citation>
    <scope>PHOSPHORYLATION [LARGE SCALE ANALYSIS] AT SER-229; SER-233; SER-237 AND SER-423</scope>
    <scope>IDENTIFICATION BY MASS SPECTROMETRY [LARGE SCALE ANALYSIS]</scope>
</reference>
<keyword id="KW-0963">Cytoplasm</keyword>
<keyword id="KW-0472">Membrane</keyword>
<keyword id="KW-0597">Phosphoprotein</keyword>
<keyword id="KW-1185">Reference proteome</keyword>
<keyword id="KW-0677">Repeat</keyword>
<keyword id="KW-0802">TPR repeat</keyword>
<sequence length="602" mass="66872">MYQGHMQGKGSRAADKAVAMVMKEIPREESAEEKPLLTMTSQLVNEQQESRPLLSPSIDDFLCETKSEAIAKPVTSNTAVLTTGLDLLDLSEPVSQTQTKAKKSESSSKSSSLKKKADGSDLISADAEQRAQALRGPETSSLDLDIQTQLEKWDDVKFHGDRTSKGHLMAERKSCSSRAGSKELLWSSEHRSQPELSTGKSALNSESASELELVAPAQARLTKEHRWGSALLSRNHSLEEEFERAKAAVESDTEFWDKMQAEWEEMARRNWISENQEAQNQVTVSASEKGYYFHTENPFKDWPGAFEEGLKRLKEGDLPVTILFMEAAILQDPGNAEAWQFLGITQAENENEQAAIVALQRCLELQPNNLKALMALAVSYTNTSHQQDACEALKNWIKQNPKYKYLVKNKKGSPGLTRRMSKSPVDSSVLEGVKDLYLEAAHQNGDMIDPDLQTGLGVLFHLSGEFNRAIDAFNAALTVRPEDYSLWNRLGATLANGDRSEEAVEAYTRALEIQPGFIRSRYNLGISCINLGAYREAVSNFLTALSLQRKSRNQQQVPHPAISGNIWAALRIALSLMDQPELFQAANLGDLDVLLRAFNLDP</sequence>
<name>PEX5R_RAT</name>
<gene>
    <name type="primary">Pex5l</name>
    <name type="synonym">Pex2</name>
    <name type="synonym">Pex5r</name>
    <name type="synonym">Trip8b</name>
</gene>
<comment type="function">
    <text evidence="4">Accessory subunit of hyperpolarization-activated cyclic nucleotide-gated (HCN) channels, regulating their cell-surface expression and cyclic nucleotide dependence.</text>
</comment>
<comment type="subunit">
    <text evidence="1 3">Forms an obligate 4:4 complex with HCN2 (By similarity). Interacts with RAB8B (PubMed:11278749). Interacts with HCN3 (By similarity). Interacts with HCN4 with a 4:4 HCN4:PEX5L stoichiometry; reduces the effects of cAMP on the voltage-dependence and rate of activation of HCN4 (By similarity).</text>
</comment>
<comment type="subcellular location">
    <subcellularLocation>
        <location evidence="3">Cytoplasm</location>
    </subcellularLocation>
    <subcellularLocation>
        <location evidence="5">Membrane</location>
        <topology evidence="5">Peripheral membrane protein</topology>
    </subcellularLocation>
    <text>Some fraction is membrane associated via its interaction with RAB8B.</text>
</comment>
<comment type="tissue specificity">
    <text evidence="3">Brain specific.</text>
</comment>
<comment type="similarity">
    <text evidence="5">Belongs to the peroxisomal targeting signal receptor family.</text>
</comment>
<accession>Q925N3</accession>